<reference key="1">
    <citation type="submission" date="2009-01" db="EMBL/GenBank/DDBJ databases">
        <title>Complete sequence of chromosome of Methylobacterium nodulans ORS 2060.</title>
        <authorList>
            <consortium name="US DOE Joint Genome Institute"/>
            <person name="Lucas S."/>
            <person name="Copeland A."/>
            <person name="Lapidus A."/>
            <person name="Glavina del Rio T."/>
            <person name="Dalin E."/>
            <person name="Tice H."/>
            <person name="Bruce D."/>
            <person name="Goodwin L."/>
            <person name="Pitluck S."/>
            <person name="Sims D."/>
            <person name="Brettin T."/>
            <person name="Detter J.C."/>
            <person name="Han C."/>
            <person name="Larimer F."/>
            <person name="Land M."/>
            <person name="Hauser L."/>
            <person name="Kyrpides N."/>
            <person name="Ivanova N."/>
            <person name="Marx C.J."/>
            <person name="Richardson P."/>
        </authorList>
    </citation>
    <scope>NUCLEOTIDE SEQUENCE [LARGE SCALE GENOMIC DNA]</scope>
    <source>
        <strain>LMG 21967 / CNCM I-2342 / ORS 2060</strain>
    </source>
</reference>
<protein>
    <recommendedName>
        <fullName evidence="1">NADH-quinone oxidoreductase subunit K</fullName>
        <ecNumber evidence="1">7.1.1.-</ecNumber>
    </recommendedName>
    <alternativeName>
        <fullName evidence="1">NADH dehydrogenase I subunit K</fullName>
    </alternativeName>
    <alternativeName>
        <fullName evidence="1">NDH-1 subunit K</fullName>
    </alternativeName>
</protein>
<evidence type="ECO:0000255" key="1">
    <source>
        <dbReference type="HAMAP-Rule" id="MF_01456"/>
    </source>
</evidence>
<gene>
    <name evidence="1" type="primary">nuoK</name>
    <name type="ordered locus">Mnod_4136</name>
</gene>
<proteinExistence type="inferred from homology"/>
<sequence>MIGLSHYLTVAAILFTLGVLGIFINRKNIIVILMSVELILLAVNINLVAFSAYLGDIVGQVFALFVLTVAAAEAAIGLAILVVFFRNRGSIAVEDVNMMKG</sequence>
<keyword id="KW-0997">Cell inner membrane</keyword>
<keyword id="KW-1003">Cell membrane</keyword>
<keyword id="KW-0472">Membrane</keyword>
<keyword id="KW-0520">NAD</keyword>
<keyword id="KW-0874">Quinone</keyword>
<keyword id="KW-1185">Reference proteome</keyword>
<keyword id="KW-1278">Translocase</keyword>
<keyword id="KW-0812">Transmembrane</keyword>
<keyword id="KW-1133">Transmembrane helix</keyword>
<keyword id="KW-0813">Transport</keyword>
<keyword id="KW-0830">Ubiquinone</keyword>
<feature type="chain" id="PRO_0000390118" description="NADH-quinone oxidoreductase subunit K">
    <location>
        <begin position="1"/>
        <end position="101"/>
    </location>
</feature>
<feature type="transmembrane region" description="Helical" evidence="1">
    <location>
        <begin position="4"/>
        <end position="24"/>
    </location>
</feature>
<feature type="transmembrane region" description="Helical" evidence="1">
    <location>
        <begin position="29"/>
        <end position="49"/>
    </location>
</feature>
<feature type="transmembrane region" description="Helical" evidence="1">
    <location>
        <begin position="65"/>
        <end position="85"/>
    </location>
</feature>
<dbReference type="EC" id="7.1.1.-" evidence="1"/>
<dbReference type="EMBL" id="CP001349">
    <property type="protein sequence ID" value="ACL59014.1"/>
    <property type="molecule type" value="Genomic_DNA"/>
</dbReference>
<dbReference type="RefSeq" id="WP_015930663.1">
    <property type="nucleotide sequence ID" value="NC_011894.1"/>
</dbReference>
<dbReference type="SMR" id="B8IUV6"/>
<dbReference type="STRING" id="460265.Mnod_4136"/>
<dbReference type="KEGG" id="mno:Mnod_4136"/>
<dbReference type="eggNOG" id="COG0713">
    <property type="taxonomic scope" value="Bacteria"/>
</dbReference>
<dbReference type="HOGENOM" id="CLU_144724_2_0_5"/>
<dbReference type="OrthoDB" id="9811124at2"/>
<dbReference type="Proteomes" id="UP000008207">
    <property type="component" value="Chromosome"/>
</dbReference>
<dbReference type="GO" id="GO:0030964">
    <property type="term" value="C:NADH dehydrogenase complex"/>
    <property type="evidence" value="ECO:0007669"/>
    <property type="project" value="TreeGrafter"/>
</dbReference>
<dbReference type="GO" id="GO:0005886">
    <property type="term" value="C:plasma membrane"/>
    <property type="evidence" value="ECO:0007669"/>
    <property type="project" value="UniProtKB-SubCell"/>
</dbReference>
<dbReference type="GO" id="GO:0050136">
    <property type="term" value="F:NADH:ubiquinone reductase (non-electrogenic) activity"/>
    <property type="evidence" value="ECO:0007669"/>
    <property type="project" value="UniProtKB-UniRule"/>
</dbReference>
<dbReference type="GO" id="GO:0048038">
    <property type="term" value="F:quinone binding"/>
    <property type="evidence" value="ECO:0007669"/>
    <property type="project" value="UniProtKB-KW"/>
</dbReference>
<dbReference type="GO" id="GO:0042773">
    <property type="term" value="P:ATP synthesis coupled electron transport"/>
    <property type="evidence" value="ECO:0007669"/>
    <property type="project" value="InterPro"/>
</dbReference>
<dbReference type="FunFam" id="1.10.287.3510:FF:000001">
    <property type="entry name" value="NADH-quinone oxidoreductase subunit K"/>
    <property type="match status" value="1"/>
</dbReference>
<dbReference type="Gene3D" id="1.10.287.3510">
    <property type="match status" value="1"/>
</dbReference>
<dbReference type="HAMAP" id="MF_01456">
    <property type="entry name" value="NDH1_NuoK"/>
    <property type="match status" value="1"/>
</dbReference>
<dbReference type="InterPro" id="IPR001133">
    <property type="entry name" value="NADH_UbQ_OxRdtase_chain4L/K"/>
</dbReference>
<dbReference type="InterPro" id="IPR039428">
    <property type="entry name" value="NUOK/Mnh_C1-like"/>
</dbReference>
<dbReference type="NCBIfam" id="NF004320">
    <property type="entry name" value="PRK05715.1-2"/>
    <property type="match status" value="1"/>
</dbReference>
<dbReference type="NCBIfam" id="NF004321">
    <property type="entry name" value="PRK05715.1-3"/>
    <property type="match status" value="1"/>
</dbReference>
<dbReference type="NCBIfam" id="NF004323">
    <property type="entry name" value="PRK05715.1-5"/>
    <property type="match status" value="1"/>
</dbReference>
<dbReference type="PANTHER" id="PTHR11434:SF21">
    <property type="entry name" value="NADH DEHYDROGENASE SUBUNIT 4L-RELATED"/>
    <property type="match status" value="1"/>
</dbReference>
<dbReference type="PANTHER" id="PTHR11434">
    <property type="entry name" value="NADH-UBIQUINONE OXIDOREDUCTASE SUBUNIT ND4L"/>
    <property type="match status" value="1"/>
</dbReference>
<dbReference type="Pfam" id="PF00420">
    <property type="entry name" value="Oxidored_q2"/>
    <property type="match status" value="1"/>
</dbReference>
<comment type="function">
    <text evidence="1">NDH-1 shuttles electrons from NADH, via FMN and iron-sulfur (Fe-S) centers, to quinones in the respiratory chain. The immediate electron acceptor for the enzyme in this species is believed to be ubiquinone. Couples the redox reaction to proton translocation (for every two electrons transferred, four hydrogen ions are translocated across the cytoplasmic membrane), and thus conserves the redox energy in a proton gradient.</text>
</comment>
<comment type="catalytic activity">
    <reaction evidence="1">
        <text>a quinone + NADH + 5 H(+)(in) = a quinol + NAD(+) + 4 H(+)(out)</text>
        <dbReference type="Rhea" id="RHEA:57888"/>
        <dbReference type="ChEBI" id="CHEBI:15378"/>
        <dbReference type="ChEBI" id="CHEBI:24646"/>
        <dbReference type="ChEBI" id="CHEBI:57540"/>
        <dbReference type="ChEBI" id="CHEBI:57945"/>
        <dbReference type="ChEBI" id="CHEBI:132124"/>
    </reaction>
</comment>
<comment type="subunit">
    <text evidence="1">NDH-1 is composed of 14 different subunits. Subunits NuoA, H, J, K, L, M, N constitute the membrane sector of the complex.</text>
</comment>
<comment type="subcellular location">
    <subcellularLocation>
        <location evidence="1">Cell inner membrane</location>
        <topology evidence="1">Multi-pass membrane protein</topology>
    </subcellularLocation>
</comment>
<comment type="similarity">
    <text evidence="1">Belongs to the complex I subunit 4L family.</text>
</comment>
<organism>
    <name type="scientific">Methylobacterium nodulans (strain LMG 21967 / CNCM I-2342 / ORS 2060)</name>
    <dbReference type="NCBI Taxonomy" id="460265"/>
    <lineage>
        <taxon>Bacteria</taxon>
        <taxon>Pseudomonadati</taxon>
        <taxon>Pseudomonadota</taxon>
        <taxon>Alphaproteobacteria</taxon>
        <taxon>Hyphomicrobiales</taxon>
        <taxon>Methylobacteriaceae</taxon>
        <taxon>Methylobacterium</taxon>
    </lineage>
</organism>
<accession>B8IUV6</accession>
<name>NUOK_METNO</name>